<proteinExistence type="evidence at transcript level"/>
<dbReference type="EMBL" id="CM000784">
    <property type="protein sequence ID" value="AFW83801.1"/>
    <property type="status" value="ALT_SEQ"/>
    <property type="molecule type" value="Genomic_DNA"/>
</dbReference>
<dbReference type="EMBL" id="EU976921">
    <property type="protein sequence ID" value="ACG49039.1"/>
    <property type="molecule type" value="mRNA"/>
</dbReference>
<dbReference type="RefSeq" id="NP_001152700.1">
    <property type="nucleotide sequence ID" value="NM_001159228.1"/>
</dbReference>
<dbReference type="FunCoup" id="B6UI56">
    <property type="interactions" value="90"/>
</dbReference>
<dbReference type="STRING" id="4577.B6UI56"/>
<dbReference type="PaxDb" id="4577-GRMZM2G107570_P01"/>
<dbReference type="EnsemblPlants" id="Zm00001eb361860_T001">
    <property type="protein sequence ID" value="Zm00001eb361860_P001"/>
    <property type="gene ID" value="Zm00001eb361860"/>
</dbReference>
<dbReference type="GeneID" id="100286341"/>
<dbReference type="Gramene" id="Zm00001eb361860_T001">
    <property type="protein sequence ID" value="Zm00001eb361860_P001"/>
    <property type="gene ID" value="Zm00001eb361860"/>
</dbReference>
<dbReference type="KEGG" id="zma:100286341"/>
<dbReference type="eggNOG" id="ENOG502QPUT">
    <property type="taxonomic scope" value="Eukaryota"/>
</dbReference>
<dbReference type="InParanoid" id="B6UI56"/>
<dbReference type="OMA" id="CTWQADR"/>
<dbReference type="OrthoDB" id="1901244at2759"/>
<dbReference type="Proteomes" id="UP000007305">
    <property type="component" value="Chromosome 8"/>
</dbReference>
<dbReference type="ExpressionAtlas" id="B6UI56">
    <property type="expression patterns" value="baseline and differential"/>
</dbReference>
<dbReference type="InterPro" id="IPR010686">
    <property type="entry name" value="OBAP-like"/>
</dbReference>
<dbReference type="PANTHER" id="PTHR31360">
    <property type="match status" value="1"/>
</dbReference>
<dbReference type="PANTHER" id="PTHR31360:SF17">
    <property type="entry name" value="OIL BODY-ASSOCIATED PROTEIN 2B"/>
    <property type="match status" value="1"/>
</dbReference>
<dbReference type="Pfam" id="PF06884">
    <property type="entry name" value="DUF1264"/>
    <property type="match status" value="1"/>
</dbReference>
<accession>B6UI56</accession>
<accession>K7V532</accession>
<reference key="1">
    <citation type="journal article" date="2009" name="Science">
        <title>The B73 maize genome: complexity, diversity, and dynamics.</title>
        <authorList>
            <person name="Schnable P.S."/>
            <person name="Ware D."/>
            <person name="Fulton R.S."/>
            <person name="Stein J.C."/>
            <person name="Wei F."/>
            <person name="Pasternak S."/>
            <person name="Liang C."/>
            <person name="Zhang J."/>
            <person name="Fulton L."/>
            <person name="Graves T.A."/>
            <person name="Minx P."/>
            <person name="Reily A.D."/>
            <person name="Courtney L."/>
            <person name="Kruchowski S.S."/>
            <person name="Tomlinson C."/>
            <person name="Strong C."/>
            <person name="Delehaunty K."/>
            <person name="Fronick C."/>
            <person name="Courtney B."/>
            <person name="Rock S.M."/>
            <person name="Belter E."/>
            <person name="Du F."/>
            <person name="Kim K."/>
            <person name="Abbott R.M."/>
            <person name="Cotton M."/>
            <person name="Levy A."/>
            <person name="Marchetto P."/>
            <person name="Ochoa K."/>
            <person name="Jackson S.M."/>
            <person name="Gillam B."/>
            <person name="Chen W."/>
            <person name="Yan L."/>
            <person name="Higginbotham J."/>
            <person name="Cardenas M."/>
            <person name="Waligorski J."/>
            <person name="Applebaum E."/>
            <person name="Phelps L."/>
            <person name="Falcone J."/>
            <person name="Kanchi K."/>
            <person name="Thane T."/>
            <person name="Scimone A."/>
            <person name="Thane N."/>
            <person name="Henke J."/>
            <person name="Wang T."/>
            <person name="Ruppert J."/>
            <person name="Shah N."/>
            <person name="Rotter K."/>
            <person name="Hodges J."/>
            <person name="Ingenthron E."/>
            <person name="Cordes M."/>
            <person name="Kohlberg S."/>
            <person name="Sgro J."/>
            <person name="Delgado B."/>
            <person name="Mead K."/>
            <person name="Chinwalla A."/>
            <person name="Leonard S."/>
            <person name="Crouse K."/>
            <person name="Collura K."/>
            <person name="Kudrna D."/>
            <person name="Currie J."/>
            <person name="He R."/>
            <person name="Angelova A."/>
            <person name="Rajasekar S."/>
            <person name="Mueller T."/>
            <person name="Lomeli R."/>
            <person name="Scara G."/>
            <person name="Ko A."/>
            <person name="Delaney K."/>
            <person name="Wissotski M."/>
            <person name="Lopez G."/>
            <person name="Campos D."/>
            <person name="Braidotti M."/>
            <person name="Ashley E."/>
            <person name="Golser W."/>
            <person name="Kim H."/>
            <person name="Lee S."/>
            <person name="Lin J."/>
            <person name="Dujmic Z."/>
            <person name="Kim W."/>
            <person name="Talag J."/>
            <person name="Zuccolo A."/>
            <person name="Fan C."/>
            <person name="Sebastian A."/>
            <person name="Kramer M."/>
            <person name="Spiegel L."/>
            <person name="Nascimento L."/>
            <person name="Zutavern T."/>
            <person name="Miller B."/>
            <person name="Ambroise C."/>
            <person name="Muller S."/>
            <person name="Spooner W."/>
            <person name="Narechania A."/>
            <person name="Ren L."/>
            <person name="Wei S."/>
            <person name="Kumari S."/>
            <person name="Faga B."/>
            <person name="Levy M.J."/>
            <person name="McMahan L."/>
            <person name="Van Buren P."/>
            <person name="Vaughn M.W."/>
            <person name="Ying K."/>
            <person name="Yeh C.-T."/>
            <person name="Emrich S.J."/>
            <person name="Jia Y."/>
            <person name="Kalyanaraman A."/>
            <person name="Hsia A.-P."/>
            <person name="Barbazuk W.B."/>
            <person name="Baucom R.S."/>
            <person name="Brutnell T.P."/>
            <person name="Carpita N.C."/>
            <person name="Chaparro C."/>
            <person name="Chia J.-M."/>
            <person name="Deragon J.-M."/>
            <person name="Estill J.C."/>
            <person name="Fu Y."/>
            <person name="Jeddeloh J.A."/>
            <person name="Han Y."/>
            <person name="Lee H."/>
            <person name="Li P."/>
            <person name="Lisch D.R."/>
            <person name="Liu S."/>
            <person name="Liu Z."/>
            <person name="Nagel D.H."/>
            <person name="McCann M.C."/>
            <person name="SanMiguel P."/>
            <person name="Myers A.M."/>
            <person name="Nettleton D."/>
            <person name="Nguyen J."/>
            <person name="Penning B.W."/>
            <person name="Ponnala L."/>
            <person name="Schneider K.L."/>
            <person name="Schwartz D.C."/>
            <person name="Sharma A."/>
            <person name="Soderlund C."/>
            <person name="Springer N.M."/>
            <person name="Sun Q."/>
            <person name="Wang H."/>
            <person name="Waterman M."/>
            <person name="Westerman R."/>
            <person name="Wolfgruber T.K."/>
            <person name="Yang L."/>
            <person name="Yu Y."/>
            <person name="Zhang L."/>
            <person name="Zhou S."/>
            <person name="Zhu Q."/>
            <person name="Bennetzen J.L."/>
            <person name="Dawe R.K."/>
            <person name="Jiang J."/>
            <person name="Jiang N."/>
            <person name="Presting G.G."/>
            <person name="Wessler S.R."/>
            <person name="Aluru S."/>
            <person name="Martienssen R.A."/>
            <person name="Clifton S.W."/>
            <person name="McCombie W.R."/>
            <person name="Wing R.A."/>
            <person name="Wilson R.K."/>
        </authorList>
    </citation>
    <scope>NUCLEOTIDE SEQUENCE [LARGE SCALE GENOMIC DNA]</scope>
    <source>
        <strain>cv. B73</strain>
    </source>
</reference>
<reference key="2">
    <citation type="journal article" date="2009" name="Plant Mol. Biol.">
        <title>Insights into corn genes derived from large-scale cDNA sequencing.</title>
        <authorList>
            <person name="Alexandrov N.N."/>
            <person name="Brover V.V."/>
            <person name="Freidin S."/>
            <person name="Troukhan M.E."/>
            <person name="Tatarinova T.V."/>
            <person name="Zhang H."/>
            <person name="Swaller T.J."/>
            <person name="Lu Y.-P."/>
            <person name="Bouck J."/>
            <person name="Flavell R.B."/>
            <person name="Feldmann K.A."/>
        </authorList>
    </citation>
    <scope>NUCLEOTIDE SEQUENCE [LARGE SCALE MRNA]</scope>
</reference>
<reference key="3">
    <citation type="journal article" date="2014" name="Plant Physiol.">
        <title>The evolutionary conserved oil body associated protein OBAP1 participates in the regulation of oil body size.</title>
        <authorList>
            <person name="Lopez-Ribera I."/>
            <person name="La Paz J.L."/>
            <person name="Repiso C."/>
            <person name="Garcia N."/>
            <person name="Miquel M."/>
            <person name="Hernandez M.L."/>
            <person name="Martinez-Rivas J.M."/>
            <person name="Vicient C.M."/>
        </authorList>
    </citation>
    <scope>GENE FAMILY</scope>
    <scope>NOMENCLATURE</scope>
</reference>
<evidence type="ECO:0000256" key="1">
    <source>
        <dbReference type="SAM" id="MobiDB-lite"/>
    </source>
</evidence>
<evidence type="ECO:0000303" key="2">
    <source>
    </source>
</evidence>
<evidence type="ECO:0000305" key="3"/>
<evidence type="ECO:0000312" key="4">
    <source>
        <dbReference type="EMBL" id="ACG49039.1"/>
    </source>
</evidence>
<evidence type="ECO:0000312" key="5">
    <source>
        <dbReference type="EMBL" id="AFW83801.1"/>
    </source>
</evidence>
<name>OBP2B_MAIZE</name>
<gene>
    <name evidence="2" type="primary">OBAP2B</name>
    <name evidence="5" type="ORF">ZEAMMB73_556159</name>
    <name type="ORF">Zm.85445</name>
</gene>
<sequence>MSSSDQNPAATPASSGPAEPSPPGRPTAVSSRVLDMGAQLAQALKPVRQMKQHACSFALYAHDLHRQVEVHHFVARLNQDVLQCAVYDSDKPSARLIGVEYIVSDTIFEGLAPDEQRLWHSHAYEVKAGLWTDVGVPEALQSSEMASLARTYGKFWCTWQADRGDALPLGAPALMVSPQAAEPGRVRGELVRGRDERYGIDSSAGGLKAARVEMDEPEWINPNADYWRLHGKGFAVDVVPAEMKRHAPFP</sequence>
<keyword id="KW-1185">Reference proteome</keyword>
<protein>
    <recommendedName>
        <fullName evidence="2">Oil body-associated protein 2B</fullName>
    </recommendedName>
</protein>
<organism evidence="4">
    <name type="scientific">Zea mays</name>
    <name type="common">Maize</name>
    <dbReference type="NCBI Taxonomy" id="4577"/>
    <lineage>
        <taxon>Eukaryota</taxon>
        <taxon>Viridiplantae</taxon>
        <taxon>Streptophyta</taxon>
        <taxon>Embryophyta</taxon>
        <taxon>Tracheophyta</taxon>
        <taxon>Spermatophyta</taxon>
        <taxon>Magnoliopsida</taxon>
        <taxon>Liliopsida</taxon>
        <taxon>Poales</taxon>
        <taxon>Poaceae</taxon>
        <taxon>PACMAD clade</taxon>
        <taxon>Panicoideae</taxon>
        <taxon>Andropogonodae</taxon>
        <taxon>Andropogoneae</taxon>
        <taxon>Tripsacinae</taxon>
        <taxon>Zea</taxon>
    </lineage>
</organism>
<feature type="chain" id="PRO_0000436093" description="Oil body-associated protein 2B">
    <location>
        <begin position="1"/>
        <end position="250"/>
    </location>
</feature>
<feature type="region of interest" description="Disordered" evidence="1">
    <location>
        <begin position="1"/>
        <end position="29"/>
    </location>
</feature>
<feature type="compositionally biased region" description="Low complexity" evidence="1">
    <location>
        <begin position="8"/>
        <end position="18"/>
    </location>
</feature>
<comment type="similarity">
    <text evidence="3">Belongs to the OBAP family.</text>
</comment>
<comment type="sequence caution" evidence="3">
    <conflict type="erroneous gene model prediction">
        <sequence resource="EMBL-CDS" id="AFW83801"/>
    </conflict>
</comment>